<keyword id="KW-0010">Activator</keyword>
<keyword id="KW-0130">Cell adhesion</keyword>
<keyword id="KW-0238">DNA-binding</keyword>
<keyword id="KW-1185">Reference proteome</keyword>
<keyword id="KW-0804">Transcription</keyword>
<keyword id="KW-0805">Transcription regulation</keyword>
<organism>
    <name type="scientific">Caulobacter vibrioides (strain ATCC 19089 / CIP 103742 / CB 15)</name>
    <name type="common">Caulobacter crescentus</name>
    <dbReference type="NCBI Taxonomy" id="190650"/>
    <lineage>
        <taxon>Bacteria</taxon>
        <taxon>Pseudomonadati</taxon>
        <taxon>Pseudomonadota</taxon>
        <taxon>Alphaproteobacteria</taxon>
        <taxon>Caulobacterales</taxon>
        <taxon>Caulobacteraceae</taxon>
        <taxon>Caulobacter</taxon>
    </lineage>
</organism>
<feature type="chain" id="PRO_0000083957" description="Putative transcription activator protein HfaB">
    <location>
        <begin position="1"/>
        <end position="337"/>
    </location>
</feature>
<feature type="region of interest" description="Disordered" evidence="1">
    <location>
        <begin position="303"/>
        <end position="337"/>
    </location>
</feature>
<feature type="compositionally biased region" description="Polar residues" evidence="1">
    <location>
        <begin position="303"/>
        <end position="313"/>
    </location>
</feature>
<feature type="compositionally biased region" description="Basic and acidic residues" evidence="1">
    <location>
        <begin position="314"/>
        <end position="337"/>
    </location>
</feature>
<feature type="sequence conflict" description="In Ref. 1; AAA23045." evidence="2" ref="1">
    <original>I</original>
    <variation>L</variation>
    <location>
        <position position="148"/>
    </location>
</feature>
<name>HFAB_CAUVC</name>
<reference key="1">
    <citation type="journal article" date="1992" name="J. Bacteriol.">
        <title>Analysis of a Caulobacter crescentus gene cluster involved in attachment of the holdfast to the cell.</title>
        <authorList>
            <person name="Kurtz H.D. Jr."/>
            <person name="Smit J."/>
        </authorList>
    </citation>
    <scope>NUCLEOTIDE SEQUENCE [GENOMIC DNA]</scope>
    <source>
        <strain>CB2</strain>
    </source>
</reference>
<reference key="2">
    <citation type="journal article" date="2001" name="Proc. Natl. Acad. Sci. U.S.A.">
        <title>Complete genome sequence of Caulobacter crescentus.</title>
        <authorList>
            <person name="Nierman W.C."/>
            <person name="Feldblyum T.V."/>
            <person name="Laub M.T."/>
            <person name="Paulsen I.T."/>
            <person name="Nelson K.E."/>
            <person name="Eisen J.A."/>
            <person name="Heidelberg J.F."/>
            <person name="Alley M.R.K."/>
            <person name="Ohta N."/>
            <person name="Maddock J.R."/>
            <person name="Potocka I."/>
            <person name="Nelson W.C."/>
            <person name="Newton A."/>
            <person name="Stephens C."/>
            <person name="Phadke N.D."/>
            <person name="Ely B."/>
            <person name="DeBoy R.T."/>
            <person name="Dodson R.J."/>
            <person name="Durkin A.S."/>
            <person name="Gwinn M.L."/>
            <person name="Haft D.H."/>
            <person name="Kolonay J.F."/>
            <person name="Smit J."/>
            <person name="Craven M.B."/>
            <person name="Khouri H.M."/>
            <person name="Shetty J."/>
            <person name="Berry K.J."/>
            <person name="Utterback T.R."/>
            <person name="Tran K."/>
            <person name="Wolf A.M."/>
            <person name="Vamathevan J.J."/>
            <person name="Ermolaeva M.D."/>
            <person name="White O."/>
            <person name="Salzberg S.L."/>
            <person name="Venter J.C."/>
            <person name="Shapiro L."/>
            <person name="Fraser C.M."/>
        </authorList>
    </citation>
    <scope>NUCLEOTIDE SEQUENCE [LARGE SCALE GENOMIC DNA]</scope>
    <source>
        <strain>ATCC 19089 / CIP 103742 / CB 15</strain>
    </source>
</reference>
<proteinExistence type="predicted"/>
<dbReference type="EMBL" id="M69129">
    <property type="protein sequence ID" value="AAA23045.1"/>
    <property type="status" value="ALT_FRAME"/>
    <property type="molecule type" value="Genomic_DNA"/>
</dbReference>
<dbReference type="EMBL" id="AE005673">
    <property type="protein sequence ID" value="AAK24597.1"/>
    <property type="molecule type" value="Genomic_DNA"/>
</dbReference>
<dbReference type="PIR" id="A87575">
    <property type="entry name" value="A87575"/>
</dbReference>
<dbReference type="RefSeq" id="NP_421429.1">
    <property type="nucleotide sequence ID" value="NC_002696.2"/>
</dbReference>
<dbReference type="RefSeq" id="WP_010920482.1">
    <property type="nucleotide sequence ID" value="NC_002696.2"/>
</dbReference>
<dbReference type="SMR" id="P27343"/>
<dbReference type="STRING" id="190650.CC_2629"/>
<dbReference type="EnsemblBacteria" id="AAK24597">
    <property type="protein sequence ID" value="AAK24597"/>
    <property type="gene ID" value="CC_2629"/>
</dbReference>
<dbReference type="KEGG" id="ccr:CC_2629"/>
<dbReference type="PATRIC" id="fig|190650.5.peg.2641"/>
<dbReference type="eggNOG" id="COG1462">
    <property type="taxonomic scope" value="Bacteria"/>
</dbReference>
<dbReference type="HOGENOM" id="CLU_058383_0_0_5"/>
<dbReference type="BioCyc" id="CAULO:CC2629-MONOMER"/>
<dbReference type="Proteomes" id="UP000001816">
    <property type="component" value="Chromosome"/>
</dbReference>
<dbReference type="GO" id="GO:0030288">
    <property type="term" value="C:outer membrane-bounded periplasmic space"/>
    <property type="evidence" value="ECO:0007669"/>
    <property type="project" value="InterPro"/>
</dbReference>
<dbReference type="GO" id="GO:0003677">
    <property type="term" value="F:DNA binding"/>
    <property type="evidence" value="ECO:0007669"/>
    <property type="project" value="UniProtKB-KW"/>
</dbReference>
<dbReference type="GO" id="GO:0007155">
    <property type="term" value="P:cell adhesion"/>
    <property type="evidence" value="ECO:0007669"/>
    <property type="project" value="UniProtKB-KW"/>
</dbReference>
<dbReference type="Gene3D" id="3.40.50.10610">
    <property type="entry name" value="ABC-type transport auxiliary lipoprotein component"/>
    <property type="match status" value="1"/>
</dbReference>
<dbReference type="InterPro" id="IPR005534">
    <property type="entry name" value="Curli_assmbl/transp-comp_CsgG"/>
</dbReference>
<dbReference type="InterPro" id="IPR049861">
    <property type="entry name" value="Holdfast_HfaB"/>
</dbReference>
<dbReference type="NCBIfam" id="NF037935">
    <property type="entry name" value="holdfast_HfaB"/>
    <property type="match status" value="1"/>
</dbReference>
<dbReference type="Pfam" id="PF03783">
    <property type="entry name" value="CsgG"/>
    <property type="match status" value="1"/>
</dbReference>
<sequence length="337" mass="36190">MMVKRTGAVLALLATAALSACGSTPVASTAGNYAKPIGTAPVTANPTDYSSALVCLNQYARTNRIVAPRIAIGRIADYTGKEESDGSGRKVTQGASLMAVSAFAKAGMPLVERFDTSVSEFELKYANNKLISDRPNPAPDAPADFRKILAGQVPGSDFYVIGGITELNYNIRSAGIDAYAGDKDTDGLKGNFRRRVFIMNIALDLRLVNTRTLEVVDVISYQKQVVGREVSAGVFDFLNGNLFDISAGRGALEPMQLAVRALIERATVEMAANLYGMPGPESCLRFDPFGDATVGQTGAFTPAYNNLGTNNAQTRDDPSRWNARRDPDIRDAKRGRY</sequence>
<comment type="function">
    <text>Required for the attachment of the holdfast to the cell. May be involved in the positive regulation of hfaC.</text>
</comment>
<comment type="sequence caution" evidence="2">
    <conflict type="frameshift">
        <sequence resource="EMBL-CDS" id="AAA23045"/>
    </conflict>
</comment>
<accession>P27343</accession>
<evidence type="ECO:0000256" key="1">
    <source>
        <dbReference type="SAM" id="MobiDB-lite"/>
    </source>
</evidence>
<evidence type="ECO:0000305" key="2"/>
<gene>
    <name type="primary">hfaB</name>
    <name type="ordered locus">CC_2629</name>
</gene>
<protein>
    <recommendedName>
        <fullName>Putative transcription activator protein HfaB</fullName>
    </recommendedName>
</protein>